<evidence type="ECO:0000255" key="1">
    <source>
        <dbReference type="HAMAP-Rule" id="MF_00104"/>
    </source>
</evidence>
<name>RNC_YERPA</name>
<organism>
    <name type="scientific">Yersinia pestis bv. Antiqua (strain Antiqua)</name>
    <dbReference type="NCBI Taxonomy" id="360102"/>
    <lineage>
        <taxon>Bacteria</taxon>
        <taxon>Pseudomonadati</taxon>
        <taxon>Pseudomonadota</taxon>
        <taxon>Gammaproteobacteria</taxon>
        <taxon>Enterobacterales</taxon>
        <taxon>Yersiniaceae</taxon>
        <taxon>Yersinia</taxon>
    </lineage>
</organism>
<feature type="chain" id="PRO_1000075852" description="Ribonuclease 3">
    <location>
        <begin position="1"/>
        <end position="226"/>
    </location>
</feature>
<feature type="domain" description="RNase III" evidence="1">
    <location>
        <begin position="6"/>
        <end position="128"/>
    </location>
</feature>
<feature type="domain" description="DRBM" evidence="1">
    <location>
        <begin position="155"/>
        <end position="225"/>
    </location>
</feature>
<feature type="active site" evidence="1">
    <location>
        <position position="45"/>
    </location>
</feature>
<feature type="active site" evidence="1">
    <location>
        <position position="117"/>
    </location>
</feature>
<feature type="binding site" evidence="1">
    <location>
        <position position="41"/>
    </location>
    <ligand>
        <name>Mg(2+)</name>
        <dbReference type="ChEBI" id="CHEBI:18420"/>
    </ligand>
</feature>
<feature type="binding site" evidence="1">
    <location>
        <position position="114"/>
    </location>
    <ligand>
        <name>Mg(2+)</name>
        <dbReference type="ChEBI" id="CHEBI:18420"/>
    </ligand>
</feature>
<feature type="binding site" evidence="1">
    <location>
        <position position="117"/>
    </location>
    <ligand>
        <name>Mg(2+)</name>
        <dbReference type="ChEBI" id="CHEBI:18420"/>
    </ligand>
</feature>
<comment type="function">
    <text evidence="1">Digests double-stranded RNA. Involved in the processing of primary rRNA transcript to yield the immediate precursors to the large and small rRNAs (23S and 16S). Processes some mRNAs, and tRNAs when they are encoded in the rRNA operon. Processes pre-crRNA and tracrRNA of type II CRISPR loci if present in the organism.</text>
</comment>
<comment type="catalytic activity">
    <reaction evidence="1">
        <text>Endonucleolytic cleavage to 5'-phosphomonoester.</text>
        <dbReference type="EC" id="3.1.26.3"/>
    </reaction>
</comment>
<comment type="cofactor">
    <cofactor evidence="1">
        <name>Mg(2+)</name>
        <dbReference type="ChEBI" id="CHEBI:18420"/>
    </cofactor>
</comment>
<comment type="subunit">
    <text evidence="1">Homodimer.</text>
</comment>
<comment type="subcellular location">
    <subcellularLocation>
        <location evidence="1">Cytoplasm</location>
    </subcellularLocation>
</comment>
<comment type="similarity">
    <text evidence="1">Belongs to the ribonuclease III family.</text>
</comment>
<keyword id="KW-0963">Cytoplasm</keyword>
<keyword id="KW-0255">Endonuclease</keyword>
<keyword id="KW-0378">Hydrolase</keyword>
<keyword id="KW-0460">Magnesium</keyword>
<keyword id="KW-0479">Metal-binding</keyword>
<keyword id="KW-0507">mRNA processing</keyword>
<keyword id="KW-0540">Nuclease</keyword>
<keyword id="KW-0694">RNA-binding</keyword>
<keyword id="KW-0698">rRNA processing</keyword>
<keyword id="KW-0699">rRNA-binding</keyword>
<keyword id="KW-0819">tRNA processing</keyword>
<reference key="1">
    <citation type="journal article" date="2006" name="J. Bacteriol.">
        <title>Complete genome sequence of Yersinia pestis strains Antiqua and Nepal516: evidence of gene reduction in an emerging pathogen.</title>
        <authorList>
            <person name="Chain P.S.G."/>
            <person name="Hu P."/>
            <person name="Malfatti S.A."/>
            <person name="Radnedge L."/>
            <person name="Larimer F."/>
            <person name="Vergez L.M."/>
            <person name="Worsham P."/>
            <person name="Chu M.C."/>
            <person name="Andersen G.L."/>
        </authorList>
    </citation>
    <scope>NUCLEOTIDE SEQUENCE [LARGE SCALE GENOMIC DNA]</scope>
    <source>
        <strain>Antiqua</strain>
    </source>
</reference>
<proteinExistence type="inferred from homology"/>
<gene>
    <name evidence="1" type="primary">rnc</name>
    <name type="ordered locus">YPA_2452</name>
</gene>
<sequence>MNPIVINRLQRKLGYTFQQQELLLQALTHRSASSKHNERLEFLGDSILSFVIANELYRRFPRVDEGDMSRMRATLVRGNTLAEMAREFDLGECLRLGPGELKSGGFRRESILADTVEALIGGVFLDSDIHTIERLILEWYHSRLEEISPGDKQKDPKTRLQEYLQGRHLPLPSYLVVQVRGEAHDQEFTIHCQVSGLNEPVIGTGSSRRKAEQAAAEQALKQLELE</sequence>
<protein>
    <recommendedName>
        <fullName evidence="1">Ribonuclease 3</fullName>
        <ecNumber evidence="1">3.1.26.3</ecNumber>
    </recommendedName>
    <alternativeName>
        <fullName evidence="1">Ribonuclease III</fullName>
        <shortName evidence="1">RNase III</shortName>
    </alternativeName>
</protein>
<accession>Q1C555</accession>
<dbReference type="EC" id="3.1.26.3" evidence="1"/>
<dbReference type="EMBL" id="CP000308">
    <property type="protein sequence ID" value="ABG14417.1"/>
    <property type="molecule type" value="Genomic_DNA"/>
</dbReference>
<dbReference type="RefSeq" id="WP_002209679.1">
    <property type="nucleotide sequence ID" value="NZ_CP009906.1"/>
</dbReference>
<dbReference type="SMR" id="Q1C555"/>
<dbReference type="GeneID" id="57975973"/>
<dbReference type="KEGG" id="ypa:YPA_2452"/>
<dbReference type="Proteomes" id="UP000001971">
    <property type="component" value="Chromosome"/>
</dbReference>
<dbReference type="GO" id="GO:0005737">
    <property type="term" value="C:cytoplasm"/>
    <property type="evidence" value="ECO:0007669"/>
    <property type="project" value="UniProtKB-SubCell"/>
</dbReference>
<dbReference type="GO" id="GO:0003725">
    <property type="term" value="F:double-stranded RNA binding"/>
    <property type="evidence" value="ECO:0007669"/>
    <property type="project" value="TreeGrafter"/>
</dbReference>
<dbReference type="GO" id="GO:0046872">
    <property type="term" value="F:metal ion binding"/>
    <property type="evidence" value="ECO:0007669"/>
    <property type="project" value="UniProtKB-KW"/>
</dbReference>
<dbReference type="GO" id="GO:0004525">
    <property type="term" value="F:ribonuclease III activity"/>
    <property type="evidence" value="ECO:0007669"/>
    <property type="project" value="UniProtKB-UniRule"/>
</dbReference>
<dbReference type="GO" id="GO:0019843">
    <property type="term" value="F:rRNA binding"/>
    <property type="evidence" value="ECO:0007669"/>
    <property type="project" value="UniProtKB-KW"/>
</dbReference>
<dbReference type="GO" id="GO:0006397">
    <property type="term" value="P:mRNA processing"/>
    <property type="evidence" value="ECO:0007669"/>
    <property type="project" value="UniProtKB-UniRule"/>
</dbReference>
<dbReference type="GO" id="GO:0010468">
    <property type="term" value="P:regulation of gene expression"/>
    <property type="evidence" value="ECO:0007669"/>
    <property type="project" value="TreeGrafter"/>
</dbReference>
<dbReference type="GO" id="GO:0006364">
    <property type="term" value="P:rRNA processing"/>
    <property type="evidence" value="ECO:0007669"/>
    <property type="project" value="UniProtKB-UniRule"/>
</dbReference>
<dbReference type="GO" id="GO:0008033">
    <property type="term" value="P:tRNA processing"/>
    <property type="evidence" value="ECO:0007669"/>
    <property type="project" value="UniProtKB-KW"/>
</dbReference>
<dbReference type="CDD" id="cd10845">
    <property type="entry name" value="DSRM_RNAse_III_family"/>
    <property type="match status" value="1"/>
</dbReference>
<dbReference type="CDD" id="cd00593">
    <property type="entry name" value="RIBOc"/>
    <property type="match status" value="1"/>
</dbReference>
<dbReference type="FunFam" id="1.10.1520.10:FF:000001">
    <property type="entry name" value="Ribonuclease 3"/>
    <property type="match status" value="1"/>
</dbReference>
<dbReference type="FunFam" id="3.30.160.20:FF:000003">
    <property type="entry name" value="Ribonuclease 3"/>
    <property type="match status" value="1"/>
</dbReference>
<dbReference type="Gene3D" id="3.30.160.20">
    <property type="match status" value="1"/>
</dbReference>
<dbReference type="Gene3D" id="1.10.1520.10">
    <property type="entry name" value="Ribonuclease III domain"/>
    <property type="match status" value="1"/>
</dbReference>
<dbReference type="HAMAP" id="MF_00104">
    <property type="entry name" value="RNase_III"/>
    <property type="match status" value="1"/>
</dbReference>
<dbReference type="InterPro" id="IPR014720">
    <property type="entry name" value="dsRBD_dom"/>
</dbReference>
<dbReference type="InterPro" id="IPR011907">
    <property type="entry name" value="RNase_III"/>
</dbReference>
<dbReference type="InterPro" id="IPR000999">
    <property type="entry name" value="RNase_III_dom"/>
</dbReference>
<dbReference type="InterPro" id="IPR036389">
    <property type="entry name" value="RNase_III_sf"/>
</dbReference>
<dbReference type="NCBIfam" id="TIGR02191">
    <property type="entry name" value="RNaseIII"/>
    <property type="match status" value="1"/>
</dbReference>
<dbReference type="PANTHER" id="PTHR11207:SF0">
    <property type="entry name" value="RIBONUCLEASE 3"/>
    <property type="match status" value="1"/>
</dbReference>
<dbReference type="PANTHER" id="PTHR11207">
    <property type="entry name" value="RIBONUCLEASE III"/>
    <property type="match status" value="1"/>
</dbReference>
<dbReference type="Pfam" id="PF00035">
    <property type="entry name" value="dsrm"/>
    <property type="match status" value="1"/>
</dbReference>
<dbReference type="Pfam" id="PF14622">
    <property type="entry name" value="Ribonucleas_3_3"/>
    <property type="match status" value="1"/>
</dbReference>
<dbReference type="SMART" id="SM00358">
    <property type="entry name" value="DSRM"/>
    <property type="match status" value="1"/>
</dbReference>
<dbReference type="SMART" id="SM00535">
    <property type="entry name" value="RIBOc"/>
    <property type="match status" value="1"/>
</dbReference>
<dbReference type="SUPFAM" id="SSF54768">
    <property type="entry name" value="dsRNA-binding domain-like"/>
    <property type="match status" value="1"/>
</dbReference>
<dbReference type="SUPFAM" id="SSF69065">
    <property type="entry name" value="RNase III domain-like"/>
    <property type="match status" value="1"/>
</dbReference>
<dbReference type="PROSITE" id="PS50137">
    <property type="entry name" value="DS_RBD"/>
    <property type="match status" value="1"/>
</dbReference>
<dbReference type="PROSITE" id="PS00517">
    <property type="entry name" value="RNASE_3_1"/>
    <property type="match status" value="1"/>
</dbReference>
<dbReference type="PROSITE" id="PS50142">
    <property type="entry name" value="RNASE_3_2"/>
    <property type="match status" value="1"/>
</dbReference>